<sequence length="607" mass="67681">MNLEELKKRQEKIRNFSIIAHIDHGKSTLADRILEKTETVSSREMQAQLLDSMDLERERGITIKLNAIELNYTAKDGETYIFHLIDTPGHVDFTYEVSRSLAACEGAILVVDAAQGIEAQTLANVYLALDNDLEIMPIINKIDLPAADPERVRTEIEDVIGLDASEAVLASAKAGIGIEEILEQIVEKVPAPTGDVTAPLKALIFDSVYDAYRGVILQVRVMDGVVKPGDKIQLMSNSKTFDVAEVGIFTPKAVGRDFLATGDVGYIAASIKTVQDTRVGDTVTLATNPAAEPLHGYKQMNPMVFAGLYPIESNKYNDLREALEKLQLNDASLQFEPETSQALGFGFRCGFLGLLHMDVIQERLEREFNIDLIMTAPSVIYKVNLTDGESMDVSNPSEFPDPTKIATIEEPYVKAQIMVPQEFVGAVMELAQRKRGDFVTMDYIDDNRVNVIYQIPLAEIVFDFFDKLKSSTRGYASFDYELSEYRPSKLVKMDILLNGDKVDALSFIVHKDFAYERGKLIVDKLKKIIPRQQFEVPIQAAIGHKIVARTDIKALRKNVLAKCYGGDVSRKRKLLEKQKAGKKRMKSIGSVEVPQEAFLSVLSMDEE</sequence>
<reference key="1">
    <citation type="journal article" date="2010" name="Genome Biol.">
        <title>Structure and dynamics of the pan-genome of Streptococcus pneumoniae and closely related species.</title>
        <authorList>
            <person name="Donati C."/>
            <person name="Hiller N.L."/>
            <person name="Tettelin H."/>
            <person name="Muzzi A."/>
            <person name="Croucher N.J."/>
            <person name="Angiuoli S.V."/>
            <person name="Oggioni M."/>
            <person name="Dunning Hotopp J.C."/>
            <person name="Hu F.Z."/>
            <person name="Riley D.R."/>
            <person name="Covacci A."/>
            <person name="Mitchell T.J."/>
            <person name="Bentley S.D."/>
            <person name="Kilian M."/>
            <person name="Ehrlich G.D."/>
            <person name="Rappuoli R."/>
            <person name="Moxon E.R."/>
            <person name="Masignani V."/>
        </authorList>
    </citation>
    <scope>NUCLEOTIDE SEQUENCE [LARGE SCALE GENOMIC DNA]</scope>
    <source>
        <strain>70585</strain>
    </source>
</reference>
<feature type="chain" id="PRO_1000190830" description="Elongation factor 4">
    <location>
        <begin position="1"/>
        <end position="607"/>
    </location>
</feature>
<feature type="domain" description="tr-type G">
    <location>
        <begin position="11"/>
        <end position="193"/>
    </location>
</feature>
<feature type="binding site" evidence="1">
    <location>
        <begin position="23"/>
        <end position="28"/>
    </location>
    <ligand>
        <name>GTP</name>
        <dbReference type="ChEBI" id="CHEBI:37565"/>
    </ligand>
</feature>
<feature type="binding site" evidence="1">
    <location>
        <begin position="140"/>
        <end position="143"/>
    </location>
    <ligand>
        <name>GTP</name>
        <dbReference type="ChEBI" id="CHEBI:37565"/>
    </ligand>
</feature>
<name>LEPA_STRP7</name>
<accession>C1C7G9</accession>
<organism>
    <name type="scientific">Streptococcus pneumoniae (strain 70585)</name>
    <dbReference type="NCBI Taxonomy" id="488221"/>
    <lineage>
        <taxon>Bacteria</taxon>
        <taxon>Bacillati</taxon>
        <taxon>Bacillota</taxon>
        <taxon>Bacilli</taxon>
        <taxon>Lactobacillales</taxon>
        <taxon>Streptococcaceae</taxon>
        <taxon>Streptococcus</taxon>
    </lineage>
</organism>
<evidence type="ECO:0000255" key="1">
    <source>
        <dbReference type="HAMAP-Rule" id="MF_00071"/>
    </source>
</evidence>
<gene>
    <name evidence="1" type="primary">lepA</name>
    <name type="ordered locus">SP70585_1250</name>
</gene>
<comment type="function">
    <text evidence="1">Required for accurate and efficient protein synthesis under certain stress conditions. May act as a fidelity factor of the translation reaction, by catalyzing a one-codon backward translocation of tRNAs on improperly translocated ribosomes. Back-translocation proceeds from a post-translocation (POST) complex to a pre-translocation (PRE) complex, thus giving elongation factor G a second chance to translocate the tRNAs correctly. Binds to ribosomes in a GTP-dependent manner.</text>
</comment>
<comment type="catalytic activity">
    <reaction evidence="1">
        <text>GTP + H2O = GDP + phosphate + H(+)</text>
        <dbReference type="Rhea" id="RHEA:19669"/>
        <dbReference type="ChEBI" id="CHEBI:15377"/>
        <dbReference type="ChEBI" id="CHEBI:15378"/>
        <dbReference type="ChEBI" id="CHEBI:37565"/>
        <dbReference type="ChEBI" id="CHEBI:43474"/>
        <dbReference type="ChEBI" id="CHEBI:58189"/>
        <dbReference type="EC" id="3.6.5.n1"/>
    </reaction>
</comment>
<comment type="subcellular location">
    <subcellularLocation>
        <location evidence="1">Cell membrane</location>
        <topology evidence="1">Peripheral membrane protein</topology>
        <orientation evidence="1">Cytoplasmic side</orientation>
    </subcellularLocation>
</comment>
<comment type="similarity">
    <text evidence="1">Belongs to the TRAFAC class translation factor GTPase superfamily. Classic translation factor GTPase family. LepA subfamily.</text>
</comment>
<proteinExistence type="inferred from homology"/>
<protein>
    <recommendedName>
        <fullName evidence="1">Elongation factor 4</fullName>
        <shortName evidence="1">EF-4</shortName>
        <ecNumber evidence="1">3.6.5.n1</ecNumber>
    </recommendedName>
    <alternativeName>
        <fullName evidence="1">Ribosomal back-translocase LepA</fullName>
    </alternativeName>
</protein>
<dbReference type="EC" id="3.6.5.n1" evidence="1"/>
<dbReference type="EMBL" id="CP000918">
    <property type="protein sequence ID" value="ACO17443.1"/>
    <property type="molecule type" value="Genomic_DNA"/>
</dbReference>
<dbReference type="RefSeq" id="WP_001047204.1">
    <property type="nucleotide sequence ID" value="NC_012468.1"/>
</dbReference>
<dbReference type="SMR" id="C1C7G9"/>
<dbReference type="GeneID" id="45653504"/>
<dbReference type="KEGG" id="snm:SP70585_1250"/>
<dbReference type="HOGENOM" id="CLU_009995_3_3_9"/>
<dbReference type="Proteomes" id="UP000002211">
    <property type="component" value="Chromosome"/>
</dbReference>
<dbReference type="GO" id="GO:0005886">
    <property type="term" value="C:plasma membrane"/>
    <property type="evidence" value="ECO:0007669"/>
    <property type="project" value="UniProtKB-SubCell"/>
</dbReference>
<dbReference type="GO" id="GO:0005525">
    <property type="term" value="F:GTP binding"/>
    <property type="evidence" value="ECO:0007669"/>
    <property type="project" value="UniProtKB-UniRule"/>
</dbReference>
<dbReference type="GO" id="GO:0003924">
    <property type="term" value="F:GTPase activity"/>
    <property type="evidence" value="ECO:0007669"/>
    <property type="project" value="UniProtKB-UniRule"/>
</dbReference>
<dbReference type="GO" id="GO:0043022">
    <property type="term" value="F:ribosome binding"/>
    <property type="evidence" value="ECO:0007669"/>
    <property type="project" value="UniProtKB-UniRule"/>
</dbReference>
<dbReference type="GO" id="GO:0003746">
    <property type="term" value="F:translation elongation factor activity"/>
    <property type="evidence" value="ECO:0007669"/>
    <property type="project" value="UniProtKB-UniRule"/>
</dbReference>
<dbReference type="GO" id="GO:0045727">
    <property type="term" value="P:positive regulation of translation"/>
    <property type="evidence" value="ECO:0007669"/>
    <property type="project" value="UniProtKB-UniRule"/>
</dbReference>
<dbReference type="CDD" id="cd03699">
    <property type="entry name" value="EF4_II"/>
    <property type="match status" value="1"/>
</dbReference>
<dbReference type="CDD" id="cd16260">
    <property type="entry name" value="EF4_III"/>
    <property type="match status" value="1"/>
</dbReference>
<dbReference type="CDD" id="cd01890">
    <property type="entry name" value="LepA"/>
    <property type="match status" value="1"/>
</dbReference>
<dbReference type="CDD" id="cd03709">
    <property type="entry name" value="lepA_C"/>
    <property type="match status" value="1"/>
</dbReference>
<dbReference type="FunFam" id="3.40.50.300:FF:000078">
    <property type="entry name" value="Elongation factor 4"/>
    <property type="match status" value="1"/>
</dbReference>
<dbReference type="FunFam" id="2.40.30.10:FF:000015">
    <property type="entry name" value="Translation factor GUF1, mitochondrial"/>
    <property type="match status" value="1"/>
</dbReference>
<dbReference type="FunFam" id="3.30.70.240:FF:000007">
    <property type="entry name" value="Translation factor GUF1, mitochondrial"/>
    <property type="match status" value="1"/>
</dbReference>
<dbReference type="FunFam" id="3.30.70.2570:FF:000001">
    <property type="entry name" value="Translation factor GUF1, mitochondrial"/>
    <property type="match status" value="1"/>
</dbReference>
<dbReference type="FunFam" id="3.30.70.870:FF:000004">
    <property type="entry name" value="Translation factor GUF1, mitochondrial"/>
    <property type="match status" value="1"/>
</dbReference>
<dbReference type="Gene3D" id="3.30.70.240">
    <property type="match status" value="1"/>
</dbReference>
<dbReference type="Gene3D" id="3.30.70.2570">
    <property type="entry name" value="Elongation factor 4, C-terminal domain"/>
    <property type="match status" value="1"/>
</dbReference>
<dbReference type="Gene3D" id="3.30.70.870">
    <property type="entry name" value="Elongation Factor G (Translational Gtpase), domain 3"/>
    <property type="match status" value="1"/>
</dbReference>
<dbReference type="Gene3D" id="3.40.50.300">
    <property type="entry name" value="P-loop containing nucleotide triphosphate hydrolases"/>
    <property type="match status" value="1"/>
</dbReference>
<dbReference type="Gene3D" id="2.40.30.10">
    <property type="entry name" value="Translation factors"/>
    <property type="match status" value="1"/>
</dbReference>
<dbReference type="HAMAP" id="MF_00071">
    <property type="entry name" value="LepA"/>
    <property type="match status" value="1"/>
</dbReference>
<dbReference type="InterPro" id="IPR006297">
    <property type="entry name" value="EF-4"/>
</dbReference>
<dbReference type="InterPro" id="IPR035647">
    <property type="entry name" value="EFG_III/V"/>
</dbReference>
<dbReference type="InterPro" id="IPR000640">
    <property type="entry name" value="EFG_V-like"/>
</dbReference>
<dbReference type="InterPro" id="IPR004161">
    <property type="entry name" value="EFTu-like_2"/>
</dbReference>
<dbReference type="InterPro" id="IPR031157">
    <property type="entry name" value="G_TR_CS"/>
</dbReference>
<dbReference type="InterPro" id="IPR038363">
    <property type="entry name" value="LepA_C_sf"/>
</dbReference>
<dbReference type="InterPro" id="IPR013842">
    <property type="entry name" value="LepA_CTD"/>
</dbReference>
<dbReference type="InterPro" id="IPR035654">
    <property type="entry name" value="LepA_IV"/>
</dbReference>
<dbReference type="InterPro" id="IPR027417">
    <property type="entry name" value="P-loop_NTPase"/>
</dbReference>
<dbReference type="InterPro" id="IPR005225">
    <property type="entry name" value="Small_GTP-bd"/>
</dbReference>
<dbReference type="InterPro" id="IPR000795">
    <property type="entry name" value="T_Tr_GTP-bd_dom"/>
</dbReference>
<dbReference type="NCBIfam" id="TIGR01393">
    <property type="entry name" value="lepA"/>
    <property type="match status" value="1"/>
</dbReference>
<dbReference type="NCBIfam" id="TIGR00231">
    <property type="entry name" value="small_GTP"/>
    <property type="match status" value="1"/>
</dbReference>
<dbReference type="PANTHER" id="PTHR43512:SF4">
    <property type="entry name" value="TRANSLATION FACTOR GUF1 HOMOLOG, CHLOROPLASTIC"/>
    <property type="match status" value="1"/>
</dbReference>
<dbReference type="PANTHER" id="PTHR43512">
    <property type="entry name" value="TRANSLATION FACTOR GUF1-RELATED"/>
    <property type="match status" value="1"/>
</dbReference>
<dbReference type="Pfam" id="PF00679">
    <property type="entry name" value="EFG_C"/>
    <property type="match status" value="1"/>
</dbReference>
<dbReference type="Pfam" id="PF00009">
    <property type="entry name" value="GTP_EFTU"/>
    <property type="match status" value="1"/>
</dbReference>
<dbReference type="Pfam" id="PF03144">
    <property type="entry name" value="GTP_EFTU_D2"/>
    <property type="match status" value="1"/>
</dbReference>
<dbReference type="Pfam" id="PF06421">
    <property type="entry name" value="LepA_C"/>
    <property type="match status" value="1"/>
</dbReference>
<dbReference type="PRINTS" id="PR00315">
    <property type="entry name" value="ELONGATNFCT"/>
</dbReference>
<dbReference type="SMART" id="SM00838">
    <property type="entry name" value="EFG_C"/>
    <property type="match status" value="1"/>
</dbReference>
<dbReference type="SUPFAM" id="SSF54980">
    <property type="entry name" value="EF-G C-terminal domain-like"/>
    <property type="match status" value="2"/>
</dbReference>
<dbReference type="SUPFAM" id="SSF52540">
    <property type="entry name" value="P-loop containing nucleoside triphosphate hydrolases"/>
    <property type="match status" value="1"/>
</dbReference>
<dbReference type="PROSITE" id="PS00301">
    <property type="entry name" value="G_TR_1"/>
    <property type="match status" value="1"/>
</dbReference>
<dbReference type="PROSITE" id="PS51722">
    <property type="entry name" value="G_TR_2"/>
    <property type="match status" value="1"/>
</dbReference>
<keyword id="KW-1003">Cell membrane</keyword>
<keyword id="KW-0342">GTP-binding</keyword>
<keyword id="KW-0378">Hydrolase</keyword>
<keyword id="KW-0472">Membrane</keyword>
<keyword id="KW-0547">Nucleotide-binding</keyword>
<keyword id="KW-0648">Protein biosynthesis</keyword>